<accession>O49558</accession>
<accession>F4JIN2</accession>
<organism>
    <name type="scientific">Arabidopsis thaliana</name>
    <name type="common">Mouse-ear cress</name>
    <dbReference type="NCBI Taxonomy" id="3702"/>
    <lineage>
        <taxon>Eukaryota</taxon>
        <taxon>Viridiplantae</taxon>
        <taxon>Streptophyta</taxon>
        <taxon>Embryophyta</taxon>
        <taxon>Tracheophyta</taxon>
        <taxon>Spermatophyta</taxon>
        <taxon>Magnoliopsida</taxon>
        <taxon>eudicotyledons</taxon>
        <taxon>Gunneridae</taxon>
        <taxon>Pentapetalae</taxon>
        <taxon>rosids</taxon>
        <taxon>malvids</taxon>
        <taxon>Brassicales</taxon>
        <taxon>Brassicaceae</taxon>
        <taxon>Camelineae</taxon>
        <taxon>Arabidopsis</taxon>
    </lineage>
</organism>
<dbReference type="EMBL" id="AL021960">
    <property type="protein sequence ID" value="CAA17536.1"/>
    <property type="status" value="ALT_SEQ"/>
    <property type="molecule type" value="Genomic_DNA"/>
</dbReference>
<dbReference type="EMBL" id="AL161554">
    <property type="protein sequence ID" value="CAB79117.1"/>
    <property type="status" value="ALT_SEQ"/>
    <property type="molecule type" value="Genomic_DNA"/>
</dbReference>
<dbReference type="EMBL" id="CP002687">
    <property type="protein sequence ID" value="AEE84415.2"/>
    <property type="molecule type" value="Genomic_DNA"/>
</dbReference>
<dbReference type="PIR" id="T04948">
    <property type="entry name" value="T04948"/>
</dbReference>
<dbReference type="RefSeq" id="NP_001320017.1">
    <property type="nucleotide sequence ID" value="NM_001341474.1"/>
</dbReference>
<dbReference type="SMR" id="O49558"/>
<dbReference type="FunCoup" id="O49558">
    <property type="interactions" value="122"/>
</dbReference>
<dbReference type="STRING" id="3702.O49558"/>
<dbReference type="GlyGen" id="O49558">
    <property type="glycosylation" value="1 site"/>
</dbReference>
<dbReference type="PaxDb" id="3702-AT4G21170.1"/>
<dbReference type="EnsemblPlants" id="AT4G21170.1">
    <property type="protein sequence ID" value="AT4G21170.1"/>
    <property type="gene ID" value="AT4G21170"/>
</dbReference>
<dbReference type="GeneID" id="827865"/>
<dbReference type="Gramene" id="AT4G21170.1">
    <property type="protein sequence ID" value="AT4G21170.1"/>
    <property type="gene ID" value="AT4G21170"/>
</dbReference>
<dbReference type="KEGG" id="ath:AT4G21170"/>
<dbReference type="Araport" id="AT4G21170"/>
<dbReference type="TAIR" id="AT4G21170"/>
<dbReference type="eggNOG" id="KOG4197">
    <property type="taxonomic scope" value="Eukaryota"/>
</dbReference>
<dbReference type="InParanoid" id="O49558"/>
<dbReference type="OMA" id="WRTQIKQ"/>
<dbReference type="PhylomeDB" id="O49558"/>
<dbReference type="PRO" id="PR:O49558"/>
<dbReference type="Proteomes" id="UP000006548">
    <property type="component" value="Chromosome 4"/>
</dbReference>
<dbReference type="ExpressionAtlas" id="O49558">
    <property type="expression patterns" value="baseline and differential"/>
</dbReference>
<dbReference type="GO" id="GO:0005739">
    <property type="term" value="C:mitochondrion"/>
    <property type="evidence" value="ECO:0007005"/>
    <property type="project" value="TAIR"/>
</dbReference>
<dbReference type="GO" id="GO:0009536">
    <property type="term" value="C:plastid"/>
    <property type="evidence" value="ECO:0007005"/>
    <property type="project" value="TAIR"/>
</dbReference>
<dbReference type="FunFam" id="1.25.40.10:FF:003124">
    <property type="entry name" value="Pentatricopeptide repeat-containing protein At4g21170"/>
    <property type="match status" value="1"/>
</dbReference>
<dbReference type="Gene3D" id="1.25.40.10">
    <property type="entry name" value="Tetratricopeptide repeat domain"/>
    <property type="match status" value="4"/>
</dbReference>
<dbReference type="InterPro" id="IPR002885">
    <property type="entry name" value="Pentatricopeptide_rpt"/>
</dbReference>
<dbReference type="InterPro" id="IPR050667">
    <property type="entry name" value="PPR-containing_protein"/>
</dbReference>
<dbReference type="InterPro" id="IPR011990">
    <property type="entry name" value="TPR-like_helical_dom_sf"/>
</dbReference>
<dbReference type="NCBIfam" id="TIGR00756">
    <property type="entry name" value="PPR"/>
    <property type="match status" value="4"/>
</dbReference>
<dbReference type="PANTHER" id="PTHR47939">
    <property type="entry name" value="MEMBRANE-ASSOCIATED SALT-INDUCIBLE PROTEIN-LIKE"/>
    <property type="match status" value="1"/>
</dbReference>
<dbReference type="PANTHER" id="PTHR47939:SF5">
    <property type="entry name" value="PENTACOTRIPEPTIDE-REPEAT REGION OF PRORP DOMAIN-CONTAINING PROTEIN"/>
    <property type="match status" value="1"/>
</dbReference>
<dbReference type="Pfam" id="PF01535">
    <property type="entry name" value="PPR"/>
    <property type="match status" value="3"/>
</dbReference>
<dbReference type="Pfam" id="PF13041">
    <property type="entry name" value="PPR_2"/>
    <property type="match status" value="2"/>
</dbReference>
<dbReference type="SUPFAM" id="SSF81901">
    <property type="entry name" value="HCP-like"/>
    <property type="match status" value="1"/>
</dbReference>
<dbReference type="PROSITE" id="PS51375">
    <property type="entry name" value="PPR"/>
    <property type="match status" value="11"/>
</dbReference>
<reference key="1">
    <citation type="journal article" date="1999" name="Nature">
        <title>Sequence and analysis of chromosome 4 of the plant Arabidopsis thaliana.</title>
        <authorList>
            <person name="Mayer K.F.X."/>
            <person name="Schueller C."/>
            <person name="Wambutt R."/>
            <person name="Murphy G."/>
            <person name="Volckaert G."/>
            <person name="Pohl T."/>
            <person name="Duesterhoeft A."/>
            <person name="Stiekema W."/>
            <person name="Entian K.-D."/>
            <person name="Terryn N."/>
            <person name="Harris B."/>
            <person name="Ansorge W."/>
            <person name="Brandt P."/>
            <person name="Grivell L.A."/>
            <person name="Rieger M."/>
            <person name="Weichselgartner M."/>
            <person name="de Simone V."/>
            <person name="Obermaier B."/>
            <person name="Mache R."/>
            <person name="Mueller M."/>
            <person name="Kreis M."/>
            <person name="Delseny M."/>
            <person name="Puigdomenech P."/>
            <person name="Watson M."/>
            <person name="Schmidtheini T."/>
            <person name="Reichert B."/>
            <person name="Portetelle D."/>
            <person name="Perez-Alonso M."/>
            <person name="Boutry M."/>
            <person name="Bancroft I."/>
            <person name="Vos P."/>
            <person name="Hoheisel J."/>
            <person name="Zimmermann W."/>
            <person name="Wedler H."/>
            <person name="Ridley P."/>
            <person name="Langham S.-A."/>
            <person name="McCullagh B."/>
            <person name="Bilham L."/>
            <person name="Robben J."/>
            <person name="van der Schueren J."/>
            <person name="Grymonprez B."/>
            <person name="Chuang Y.-J."/>
            <person name="Vandenbussche F."/>
            <person name="Braeken M."/>
            <person name="Weltjens I."/>
            <person name="Voet M."/>
            <person name="Bastiaens I."/>
            <person name="Aert R."/>
            <person name="Defoor E."/>
            <person name="Weitzenegger T."/>
            <person name="Bothe G."/>
            <person name="Ramsperger U."/>
            <person name="Hilbert H."/>
            <person name="Braun M."/>
            <person name="Holzer E."/>
            <person name="Brandt A."/>
            <person name="Peters S."/>
            <person name="van Staveren M."/>
            <person name="Dirkse W."/>
            <person name="Mooijman P."/>
            <person name="Klein Lankhorst R."/>
            <person name="Rose M."/>
            <person name="Hauf J."/>
            <person name="Koetter P."/>
            <person name="Berneiser S."/>
            <person name="Hempel S."/>
            <person name="Feldpausch M."/>
            <person name="Lamberth S."/>
            <person name="Van den Daele H."/>
            <person name="De Keyser A."/>
            <person name="Buysshaert C."/>
            <person name="Gielen J."/>
            <person name="Villarroel R."/>
            <person name="De Clercq R."/>
            <person name="van Montagu M."/>
            <person name="Rogers J."/>
            <person name="Cronin A."/>
            <person name="Quail M.A."/>
            <person name="Bray-Allen S."/>
            <person name="Clark L."/>
            <person name="Doggett J."/>
            <person name="Hall S."/>
            <person name="Kay M."/>
            <person name="Lennard N."/>
            <person name="McLay K."/>
            <person name="Mayes R."/>
            <person name="Pettett A."/>
            <person name="Rajandream M.A."/>
            <person name="Lyne M."/>
            <person name="Benes V."/>
            <person name="Rechmann S."/>
            <person name="Borkova D."/>
            <person name="Bloecker H."/>
            <person name="Scharfe M."/>
            <person name="Grimm M."/>
            <person name="Loehnert T.-H."/>
            <person name="Dose S."/>
            <person name="de Haan M."/>
            <person name="Maarse A.C."/>
            <person name="Schaefer M."/>
            <person name="Mueller-Auer S."/>
            <person name="Gabel C."/>
            <person name="Fuchs M."/>
            <person name="Fartmann B."/>
            <person name="Granderath K."/>
            <person name="Dauner D."/>
            <person name="Herzl A."/>
            <person name="Neumann S."/>
            <person name="Argiriou A."/>
            <person name="Vitale D."/>
            <person name="Liguori R."/>
            <person name="Piravandi E."/>
            <person name="Massenet O."/>
            <person name="Quigley F."/>
            <person name="Clabauld G."/>
            <person name="Muendlein A."/>
            <person name="Felber R."/>
            <person name="Schnabl S."/>
            <person name="Hiller R."/>
            <person name="Schmidt W."/>
            <person name="Lecharny A."/>
            <person name="Aubourg S."/>
            <person name="Chefdor F."/>
            <person name="Cooke R."/>
            <person name="Berger C."/>
            <person name="Monfort A."/>
            <person name="Casacuberta E."/>
            <person name="Gibbons T."/>
            <person name="Weber N."/>
            <person name="Vandenbol M."/>
            <person name="Bargues M."/>
            <person name="Terol J."/>
            <person name="Torres A."/>
            <person name="Perez-Perez A."/>
            <person name="Purnelle B."/>
            <person name="Bent E."/>
            <person name="Johnson S."/>
            <person name="Tacon D."/>
            <person name="Jesse T."/>
            <person name="Heijnen L."/>
            <person name="Schwarz S."/>
            <person name="Scholler P."/>
            <person name="Heber S."/>
            <person name="Francs P."/>
            <person name="Bielke C."/>
            <person name="Frishman D."/>
            <person name="Haase D."/>
            <person name="Lemcke K."/>
            <person name="Mewes H.-W."/>
            <person name="Stocker S."/>
            <person name="Zaccaria P."/>
            <person name="Bevan M."/>
            <person name="Wilson R.K."/>
            <person name="de la Bastide M."/>
            <person name="Habermann K."/>
            <person name="Parnell L."/>
            <person name="Dedhia N."/>
            <person name="Gnoj L."/>
            <person name="Schutz K."/>
            <person name="Huang E."/>
            <person name="Spiegel L."/>
            <person name="Sekhon M."/>
            <person name="Murray J."/>
            <person name="Sheet P."/>
            <person name="Cordes M."/>
            <person name="Abu-Threideh J."/>
            <person name="Stoneking T."/>
            <person name="Kalicki J."/>
            <person name="Graves T."/>
            <person name="Harmon G."/>
            <person name="Edwards J."/>
            <person name="Latreille P."/>
            <person name="Courtney L."/>
            <person name="Cloud J."/>
            <person name="Abbott A."/>
            <person name="Scott K."/>
            <person name="Johnson D."/>
            <person name="Minx P."/>
            <person name="Bentley D."/>
            <person name="Fulton B."/>
            <person name="Miller N."/>
            <person name="Greco T."/>
            <person name="Kemp K."/>
            <person name="Kramer J."/>
            <person name="Fulton L."/>
            <person name="Mardis E."/>
            <person name="Dante M."/>
            <person name="Pepin K."/>
            <person name="Hillier L.W."/>
            <person name="Nelson J."/>
            <person name="Spieth J."/>
            <person name="Ryan E."/>
            <person name="Andrews S."/>
            <person name="Geisel C."/>
            <person name="Layman D."/>
            <person name="Du H."/>
            <person name="Ali J."/>
            <person name="Berghoff A."/>
            <person name="Jones K."/>
            <person name="Drone K."/>
            <person name="Cotton M."/>
            <person name="Joshu C."/>
            <person name="Antonoiu B."/>
            <person name="Zidanic M."/>
            <person name="Strong C."/>
            <person name="Sun H."/>
            <person name="Lamar B."/>
            <person name="Yordan C."/>
            <person name="Ma P."/>
            <person name="Zhong J."/>
            <person name="Preston R."/>
            <person name="Vil D."/>
            <person name="Shekher M."/>
            <person name="Matero A."/>
            <person name="Shah R."/>
            <person name="Swaby I.K."/>
            <person name="O'Shaughnessy A."/>
            <person name="Rodriguez M."/>
            <person name="Hoffman J."/>
            <person name="Till S."/>
            <person name="Granat S."/>
            <person name="Shohdy N."/>
            <person name="Hasegawa A."/>
            <person name="Hameed A."/>
            <person name="Lodhi M."/>
            <person name="Johnson A."/>
            <person name="Chen E."/>
            <person name="Marra M.A."/>
            <person name="Martienssen R."/>
            <person name="McCombie W.R."/>
        </authorList>
    </citation>
    <scope>NUCLEOTIDE SEQUENCE [LARGE SCALE GENOMIC DNA]</scope>
    <source>
        <strain>cv. Columbia</strain>
    </source>
</reference>
<reference key="2">
    <citation type="journal article" date="2017" name="Plant J.">
        <title>Araport11: a complete reannotation of the Arabidopsis thaliana reference genome.</title>
        <authorList>
            <person name="Cheng C.Y."/>
            <person name="Krishnakumar V."/>
            <person name="Chan A.P."/>
            <person name="Thibaud-Nissen F."/>
            <person name="Schobel S."/>
            <person name="Town C.D."/>
        </authorList>
    </citation>
    <scope>GENOME REANNOTATION</scope>
    <source>
        <strain>cv. Columbia</strain>
    </source>
</reference>
<reference key="3">
    <citation type="journal article" date="2004" name="Plant Cell">
        <title>Genome-wide analysis of Arabidopsis pentatricopeptide repeat proteins reveals their essential role in organelle biogenesis.</title>
        <authorList>
            <person name="Lurin C."/>
            <person name="Andres C."/>
            <person name="Aubourg S."/>
            <person name="Bellaoui M."/>
            <person name="Bitton F."/>
            <person name="Bruyere C."/>
            <person name="Caboche M."/>
            <person name="Debast C."/>
            <person name="Gualberto J."/>
            <person name="Hoffmann B."/>
            <person name="Lecharny A."/>
            <person name="Le Ret M."/>
            <person name="Martin-Magniette M.-L."/>
            <person name="Mireau H."/>
            <person name="Peeters N."/>
            <person name="Renou J.-P."/>
            <person name="Szurek B."/>
            <person name="Taconnat L."/>
            <person name="Small I."/>
        </authorList>
    </citation>
    <scope>GENE FAMILY</scope>
</reference>
<comment type="similarity">
    <text evidence="1">Belongs to the PPR family. P subfamily.</text>
</comment>
<comment type="sequence caution" evidence="1">
    <conflict type="erroneous gene model prediction">
        <sequence resource="EMBL-CDS" id="CAA17536"/>
    </conflict>
</comment>
<comment type="sequence caution" evidence="1">
    <conflict type="erroneous gene model prediction">
        <sequence resource="EMBL-CDS" id="CAB79117"/>
    </conflict>
</comment>
<comment type="online information" name="Pentatricopeptide repeat proteins">
    <link uri="https://ppr.plantenergy.uwa.edu.au"/>
</comment>
<protein>
    <recommendedName>
        <fullName>Pentatricopeptide repeat-containing protein At4g21170</fullName>
    </recommendedName>
</protein>
<evidence type="ECO:0000305" key="1"/>
<proteinExistence type="inferred from homology"/>
<keyword id="KW-1185">Reference proteome</keyword>
<keyword id="KW-0677">Repeat</keyword>
<gene>
    <name type="ordered locus">At4g21170</name>
    <name type="ORF">F7J7.110</name>
</gene>
<sequence length="585" mass="67092">MVLIHTSVGFFKRFSTSATPSTSSASDWKTQQTLFRVATEISSILLQRRNWITHLQYVKSKLPRSTLTSPVFLQILRETRKCPKTTLDFFDFAKTHLRFEPDLKSHCRVIEVAAESGLLERAEMLLRPLVETNSVSLVVGEMHRWFEGEVSLSVSLSLVLEYYALKGSHHNGLEVFGFMRRLRLSPSQSAYNSLLGSLVKENQFRVALCLYSAMVRNGIVSDELTWDLIAQILCEQGRSKSVFKLMETGVESCKIYTNLVECYSRNGEFDAVFSLIHEMDDKKLELSFCSYGCVLDDACRLGDAEFIDKVLCLMVEKKFVTLGDSAVNDKIIERLCDMGKTFASEMLFRKACNGETVRLWDSTYGCMLKALSRKKRTKEAVDVYRMICRKGITVLDESCYIEFANALCRDDNSSEEEEELLVDVIKRGFVPCTHKLSEVLASMCRKRRWKSAEKLLDSVMEMEVYFDSFACGLLMERYCRSGKLEKALVLHEKIKKMKGSLDVNAYNAVLDRLMMRQKEMVEEAVVVFEYMKEINSVNSKSFTIMIQGLCRVKEMKKAMRSHDEMLRLGLKPDLVTYKRLILGFK</sequence>
<feature type="chain" id="PRO_0000363448" description="Pentatricopeptide repeat-containing protein At4g21170">
    <location>
        <begin position="1"/>
        <end position="585"/>
    </location>
</feature>
<feature type="repeat" description="PPR 1">
    <location>
        <begin position="152"/>
        <end position="186"/>
    </location>
</feature>
<feature type="repeat" description="PPR 2">
    <location>
        <begin position="187"/>
        <end position="221"/>
    </location>
</feature>
<feature type="repeat" description="PPR 3">
    <location>
        <begin position="222"/>
        <end position="247"/>
    </location>
</feature>
<feature type="repeat" description="PPR 4">
    <location>
        <begin position="252"/>
        <end position="286"/>
    </location>
</feature>
<feature type="repeat" description="PPR 5">
    <location>
        <begin position="287"/>
        <end position="321"/>
    </location>
</feature>
<feature type="repeat" description="PPR 6">
    <location>
        <begin position="324"/>
        <end position="358"/>
    </location>
</feature>
<feature type="repeat" description="PPR 7">
    <location>
        <begin position="360"/>
        <end position="394"/>
    </location>
</feature>
<feature type="repeat" description="PPR 8">
    <location>
        <begin position="396"/>
        <end position="431"/>
    </location>
</feature>
<feature type="repeat" description="PPR 9">
    <location>
        <begin position="432"/>
        <end position="466"/>
    </location>
</feature>
<feature type="repeat" description="PPR 10">
    <location>
        <begin position="467"/>
        <end position="501"/>
    </location>
</feature>
<feature type="repeat" description="PPR 11">
    <location>
        <begin position="502"/>
        <end position="534"/>
    </location>
</feature>
<feature type="repeat" description="PPR 12">
    <location>
        <begin position="538"/>
        <end position="572"/>
    </location>
</feature>
<name>PP331_ARATH</name>